<proteinExistence type="inferred from homology"/>
<protein>
    <recommendedName>
        <fullName evidence="1">A-type ATP synthase subunit B</fullName>
    </recommendedName>
</protein>
<keyword id="KW-0066">ATP synthesis</keyword>
<keyword id="KW-1003">Cell membrane</keyword>
<keyword id="KW-0375">Hydrogen ion transport</keyword>
<keyword id="KW-0406">Ion transport</keyword>
<keyword id="KW-0472">Membrane</keyword>
<keyword id="KW-1185">Reference proteome</keyword>
<keyword id="KW-0813">Transport</keyword>
<organism>
    <name type="scientific">Haloarcula marismortui (strain ATCC 43049 / DSM 3752 / JCM 8966 / VKM B-1809)</name>
    <name type="common">Halobacterium marismortui</name>
    <dbReference type="NCBI Taxonomy" id="272569"/>
    <lineage>
        <taxon>Archaea</taxon>
        <taxon>Methanobacteriati</taxon>
        <taxon>Methanobacteriota</taxon>
        <taxon>Stenosarchaea group</taxon>
        <taxon>Halobacteria</taxon>
        <taxon>Halobacteriales</taxon>
        <taxon>Haloarculaceae</taxon>
        <taxon>Haloarcula</taxon>
    </lineage>
</organism>
<comment type="function">
    <text evidence="1">Component of the A-type ATP synthase that produces ATP from ADP in the presence of a proton gradient across the membrane. The B chain is a regulatory subunit.</text>
</comment>
<comment type="subunit">
    <text evidence="1">Has multiple subunits with at least A(3), B(3), C, D, E, F, H, I and proteolipid K(x).</text>
</comment>
<comment type="subcellular location">
    <subcellularLocation>
        <location evidence="1">Cell membrane</location>
        <topology evidence="1">Peripheral membrane protein</topology>
    </subcellularLocation>
</comment>
<comment type="similarity">
    <text evidence="1">Belongs to the ATPase alpha/beta chains family.</text>
</comment>
<dbReference type="EMBL" id="AY596297">
    <property type="protein sequence ID" value="AAV47866.1"/>
    <property type="molecule type" value="Genomic_DNA"/>
</dbReference>
<dbReference type="EMBL" id="HQ149346">
    <property type="protein sequence ID" value="ADP09072.1"/>
    <property type="molecule type" value="Genomic_DNA"/>
</dbReference>
<dbReference type="RefSeq" id="WP_007189221.1">
    <property type="nucleotide sequence ID" value="NZ_CP039138.1"/>
</dbReference>
<dbReference type="SMR" id="Q5UXY7"/>
<dbReference type="STRING" id="272569.rrnAC3160"/>
<dbReference type="PaxDb" id="272569-rrnAC3160"/>
<dbReference type="EnsemblBacteria" id="AAV47866">
    <property type="protein sequence ID" value="AAV47866"/>
    <property type="gene ID" value="rrnAC3160"/>
</dbReference>
<dbReference type="KEGG" id="hma:rrnAC3160"/>
<dbReference type="PATRIC" id="fig|272569.17.peg.3700"/>
<dbReference type="eggNOG" id="arCOG00865">
    <property type="taxonomic scope" value="Archaea"/>
</dbReference>
<dbReference type="HOGENOM" id="CLU_022916_0_0_2"/>
<dbReference type="Proteomes" id="UP000001169">
    <property type="component" value="Chromosome I"/>
</dbReference>
<dbReference type="GO" id="GO:0005886">
    <property type="term" value="C:plasma membrane"/>
    <property type="evidence" value="ECO:0007669"/>
    <property type="project" value="UniProtKB-SubCell"/>
</dbReference>
<dbReference type="GO" id="GO:0033178">
    <property type="term" value="C:proton-transporting two-sector ATPase complex, catalytic domain"/>
    <property type="evidence" value="ECO:0007669"/>
    <property type="project" value="InterPro"/>
</dbReference>
<dbReference type="GO" id="GO:0005524">
    <property type="term" value="F:ATP binding"/>
    <property type="evidence" value="ECO:0007669"/>
    <property type="project" value="UniProtKB-UniRule"/>
</dbReference>
<dbReference type="GO" id="GO:0046933">
    <property type="term" value="F:proton-transporting ATP synthase activity, rotational mechanism"/>
    <property type="evidence" value="ECO:0007669"/>
    <property type="project" value="UniProtKB-UniRule"/>
</dbReference>
<dbReference type="GO" id="GO:0042777">
    <property type="term" value="P:proton motive force-driven plasma membrane ATP synthesis"/>
    <property type="evidence" value="ECO:0007669"/>
    <property type="project" value="UniProtKB-UniRule"/>
</dbReference>
<dbReference type="CDD" id="cd18112">
    <property type="entry name" value="ATP-synt_V_A-type_beta_C"/>
    <property type="match status" value="1"/>
</dbReference>
<dbReference type="CDD" id="cd18118">
    <property type="entry name" value="ATP-synt_V_A-type_beta_N"/>
    <property type="match status" value="1"/>
</dbReference>
<dbReference type="CDD" id="cd01135">
    <property type="entry name" value="V_A-ATPase_B"/>
    <property type="match status" value="1"/>
</dbReference>
<dbReference type="Gene3D" id="3.40.50.12240">
    <property type="match status" value="1"/>
</dbReference>
<dbReference type="HAMAP" id="MF_00310">
    <property type="entry name" value="ATP_synth_B_arch"/>
    <property type="match status" value="1"/>
</dbReference>
<dbReference type="InterPro" id="IPR055190">
    <property type="entry name" value="ATP-synt_VA_C"/>
</dbReference>
<dbReference type="InterPro" id="IPR020003">
    <property type="entry name" value="ATPase_a/bsu_AS"/>
</dbReference>
<dbReference type="InterPro" id="IPR005724">
    <property type="entry name" value="ATPase_A1-cplx_bsu"/>
</dbReference>
<dbReference type="InterPro" id="IPR004100">
    <property type="entry name" value="ATPase_F1/V1/A1_a/bsu_N"/>
</dbReference>
<dbReference type="InterPro" id="IPR000194">
    <property type="entry name" value="ATPase_F1/V1/A1_a/bsu_nucl-bd"/>
</dbReference>
<dbReference type="InterPro" id="IPR027417">
    <property type="entry name" value="P-loop_NTPase"/>
</dbReference>
<dbReference type="InterPro" id="IPR022879">
    <property type="entry name" value="V-ATPase_su_B/beta"/>
</dbReference>
<dbReference type="NCBIfam" id="TIGR01041">
    <property type="entry name" value="ATP_syn_B_arch"/>
    <property type="match status" value="1"/>
</dbReference>
<dbReference type="NCBIfam" id="NF003235">
    <property type="entry name" value="PRK04196.1"/>
    <property type="match status" value="1"/>
</dbReference>
<dbReference type="PANTHER" id="PTHR43389">
    <property type="entry name" value="V-TYPE PROTON ATPASE SUBUNIT B"/>
    <property type="match status" value="1"/>
</dbReference>
<dbReference type="PANTHER" id="PTHR43389:SF4">
    <property type="entry name" value="V-TYPE PROTON ATPASE SUBUNIT B"/>
    <property type="match status" value="1"/>
</dbReference>
<dbReference type="Pfam" id="PF00006">
    <property type="entry name" value="ATP-synt_ab"/>
    <property type="match status" value="1"/>
</dbReference>
<dbReference type="Pfam" id="PF02874">
    <property type="entry name" value="ATP-synt_ab_N"/>
    <property type="match status" value="1"/>
</dbReference>
<dbReference type="Pfam" id="PF22919">
    <property type="entry name" value="ATP-synt_VA_C"/>
    <property type="match status" value="1"/>
</dbReference>
<dbReference type="PIRSF" id="PIRSF039114">
    <property type="entry name" value="V-ATPsynth_beta/V-ATPase_B"/>
    <property type="match status" value="1"/>
</dbReference>
<dbReference type="SUPFAM" id="SSF47917">
    <property type="entry name" value="C-terminal domain of alpha and beta subunits of F1 ATP synthase"/>
    <property type="match status" value="1"/>
</dbReference>
<dbReference type="SUPFAM" id="SSF52540">
    <property type="entry name" value="P-loop containing nucleoside triphosphate hydrolases"/>
    <property type="match status" value="1"/>
</dbReference>
<dbReference type="PROSITE" id="PS00152">
    <property type="entry name" value="ATPASE_ALPHA_BETA"/>
    <property type="match status" value="1"/>
</dbReference>
<name>AATB_HALMA</name>
<sequence length="470" mass="52262">MKEYQTITEISGPLVFVETDEPVGYDDIVEIELSDGETRRGQVLESASDYVAIQVFEGTEGIDRDASVRFLGETMKMPVTEDLLGRVMDGTGQPIDGGPEIVPDERRDIVGEAINPFSREYPEEFIQTGVSAIDGMNTLVRGQKLPIFSASGLPHNDLALQIARQATVPEEEDGEDDEGSEFAVIFGAMGITAEEANEFMDDFERTGALERSVVFMNLADDPAVERTITPRLALTTAEYLAFEKDYHVLVILTDMTNYCEALREIGAAREEVPGRRGYPGYMYTDLAQLYERAGRIEGREGSVTQLPILTMPGDDDTHPIPDLTGYITEGQIYIDRDLNSQGIQPPINVLPSLSRLMDDGIGEGLTRADHADVKDQIFAAYAEGEDLRDLVNIVGREALSELDNKYLDFADRFEEEFVDQGTDTARSIDETLELGWDLLSMLPKDALNRIDEDLIEEHYREDETAETVEA</sequence>
<gene>
    <name evidence="1 2" type="primary">atpB</name>
    <name evidence="3" type="synonym">ntpB</name>
    <name type="ordered locus">rrnAC3160</name>
</gene>
<accession>Q5UXY7</accession>
<accession>E3VNT8</accession>
<reference key="1">
    <citation type="journal article" date="2004" name="Genome Res.">
        <title>Genome sequence of Haloarcula marismortui: a halophilic archaeon from the Dead Sea.</title>
        <authorList>
            <person name="Baliga N.S."/>
            <person name="Bonneau R."/>
            <person name="Facciotti M.T."/>
            <person name="Pan M."/>
            <person name="Glusman G."/>
            <person name="Deutsch E.W."/>
            <person name="Shannon P."/>
            <person name="Chiu Y."/>
            <person name="Weng R.S."/>
            <person name="Gan R.R."/>
            <person name="Hung P."/>
            <person name="Date S.V."/>
            <person name="Marcotte E."/>
            <person name="Hood L."/>
            <person name="Ng W.V."/>
        </authorList>
    </citation>
    <scope>NUCLEOTIDE SEQUENCE [LARGE SCALE GENOMIC DNA]</scope>
    <source>
        <strain>ATCC 43049 / DSM 3752 / JCM 8966 / VKM B-1809</strain>
    </source>
</reference>
<reference key="2">
    <citation type="journal article" date="2011" name="Int. J. Syst. Evol. Microbiol.">
        <title>A multilocus sequence analysis approach to the phylogeny and taxonomy of the Halobacteriales.</title>
        <authorList>
            <person name="Papke R.T."/>
            <person name="White E."/>
            <person name="Reddy P."/>
            <person name="Weigel G."/>
            <person name="Kamekura M."/>
            <person name="Minegishi H."/>
            <person name="Usami R."/>
            <person name="Ventosa A."/>
        </authorList>
    </citation>
    <scope>NUCLEOTIDE SEQUENCE [GENOMIC DNA] OF 117-280</scope>
    <source>
        <strain>ATCC 43049 / DSM 3752 / JCM 8966 / VKM B-1809</strain>
    </source>
</reference>
<feature type="chain" id="PRO_1000059371" description="A-type ATP synthase subunit B">
    <location>
        <begin position="1"/>
        <end position="470"/>
    </location>
</feature>
<evidence type="ECO:0000255" key="1">
    <source>
        <dbReference type="HAMAP-Rule" id="MF_00310"/>
    </source>
</evidence>
<evidence type="ECO:0000303" key="2">
    <source>
    </source>
</evidence>
<evidence type="ECO:0000312" key="3">
    <source>
        <dbReference type="EMBL" id="AAV47866.1"/>
    </source>
</evidence>